<dbReference type="EMBL" id="CU329671">
    <property type="protein sequence ID" value="CAA18393.1"/>
    <property type="molecule type" value="Genomic_DNA"/>
</dbReference>
<dbReference type="PIR" id="T40087">
    <property type="entry name" value="T40087"/>
</dbReference>
<dbReference type="SMR" id="O59678"/>
<dbReference type="BioGRID" id="276854">
    <property type="interactions" value="16"/>
</dbReference>
<dbReference type="FunCoup" id="O59678">
    <property type="interactions" value="180"/>
</dbReference>
<dbReference type="IntAct" id="O59678">
    <property type="interactions" value="3"/>
</dbReference>
<dbReference type="STRING" id="284812.O59678"/>
<dbReference type="iPTMnet" id="O59678"/>
<dbReference type="PaxDb" id="4896-SPBC29A3.16.1"/>
<dbReference type="EnsemblFungi" id="SPBC29A3.16.1">
    <property type="protein sequence ID" value="SPBC29A3.16.1:pep"/>
    <property type="gene ID" value="SPBC29A3.16"/>
</dbReference>
<dbReference type="KEGG" id="spo:2540324"/>
<dbReference type="PomBase" id="SPBC29A3.16"/>
<dbReference type="VEuPathDB" id="FungiDB:SPBC29A3.16"/>
<dbReference type="eggNOG" id="KOG1765">
    <property type="taxonomic scope" value="Eukaryota"/>
</dbReference>
<dbReference type="HOGENOM" id="CLU_065163_2_1_1"/>
<dbReference type="InParanoid" id="O59678"/>
<dbReference type="OMA" id="KMVYDEA"/>
<dbReference type="PhylomeDB" id="O59678"/>
<dbReference type="PRO" id="PR:O59678"/>
<dbReference type="Proteomes" id="UP000002485">
    <property type="component" value="Chromosome II"/>
</dbReference>
<dbReference type="GO" id="GO:0005730">
    <property type="term" value="C:nucleolus"/>
    <property type="evidence" value="ECO:0000314"/>
    <property type="project" value="PomBase"/>
</dbReference>
<dbReference type="GO" id="GO:0005634">
    <property type="term" value="C:nucleus"/>
    <property type="evidence" value="ECO:0007005"/>
    <property type="project" value="PomBase"/>
</dbReference>
<dbReference type="GO" id="GO:0030687">
    <property type="term" value="C:preribosome, large subunit precursor"/>
    <property type="evidence" value="ECO:0000318"/>
    <property type="project" value="GO_Central"/>
</dbReference>
<dbReference type="GO" id="GO:0000447">
    <property type="term" value="P:endonucleolytic cleavage in ITS1 to separate SSU-rRNA from 5.8S rRNA and LSU-rRNA from tricistronic rRNA transcript (SSU-rRNA, 5.8S rRNA, LSU-rRNA)"/>
    <property type="evidence" value="ECO:0000318"/>
    <property type="project" value="GO_Central"/>
</dbReference>
<dbReference type="GO" id="GO:0042273">
    <property type="term" value="P:ribosomal large subunit biogenesis"/>
    <property type="evidence" value="ECO:0000315"/>
    <property type="project" value="PomBase"/>
</dbReference>
<dbReference type="InterPro" id="IPR007023">
    <property type="entry name" value="Ribosom_reg"/>
</dbReference>
<dbReference type="Pfam" id="PF04939">
    <property type="entry name" value="RRS1"/>
    <property type="match status" value="1"/>
</dbReference>
<comment type="function">
    <text evidence="1">Involved in ribosomal large subunit assembly.</text>
</comment>
<comment type="subunit">
    <text evidence="1 3">Component of a hexameric 5S RNP precursor complex, composed of 5S RNA, rrs1, rpf2, rpl5a/rpl5b, rpl11a/rpl11b and syo1; this complex acts as a precursor for ribosome assembly (By similarity). Interacts with sad1 (PubMed:14655046).</text>
</comment>
<comment type="subcellular location">
    <subcellularLocation>
        <location evidence="3">Nucleus</location>
        <location evidence="3">Nucleolus</location>
    </subcellularLocation>
</comment>
<comment type="similarity">
    <text evidence="5">Belongs to the RRS1 family.</text>
</comment>
<name>RRS1_SCHPO</name>
<organism>
    <name type="scientific">Schizosaccharomyces pombe (strain 972 / ATCC 24843)</name>
    <name type="common">Fission yeast</name>
    <dbReference type="NCBI Taxonomy" id="284812"/>
    <lineage>
        <taxon>Eukaryota</taxon>
        <taxon>Fungi</taxon>
        <taxon>Dikarya</taxon>
        <taxon>Ascomycota</taxon>
        <taxon>Taphrinomycotina</taxon>
        <taxon>Schizosaccharomycetes</taxon>
        <taxon>Schizosaccharomycetales</taxon>
        <taxon>Schizosaccharomycetaceae</taxon>
        <taxon>Schizosaccharomyces</taxon>
    </lineage>
</organism>
<reference key="1">
    <citation type="journal article" date="2002" name="Nature">
        <title>The genome sequence of Schizosaccharomyces pombe.</title>
        <authorList>
            <person name="Wood V."/>
            <person name="Gwilliam R."/>
            <person name="Rajandream M.A."/>
            <person name="Lyne M.H."/>
            <person name="Lyne R."/>
            <person name="Stewart A."/>
            <person name="Sgouros J.G."/>
            <person name="Peat N."/>
            <person name="Hayles J."/>
            <person name="Baker S.G."/>
            <person name="Basham D."/>
            <person name="Bowman S."/>
            <person name="Brooks K."/>
            <person name="Brown D."/>
            <person name="Brown S."/>
            <person name="Chillingworth T."/>
            <person name="Churcher C.M."/>
            <person name="Collins M."/>
            <person name="Connor R."/>
            <person name="Cronin A."/>
            <person name="Davis P."/>
            <person name="Feltwell T."/>
            <person name="Fraser A."/>
            <person name="Gentles S."/>
            <person name="Goble A."/>
            <person name="Hamlin N."/>
            <person name="Harris D.E."/>
            <person name="Hidalgo J."/>
            <person name="Hodgson G."/>
            <person name="Holroyd S."/>
            <person name="Hornsby T."/>
            <person name="Howarth S."/>
            <person name="Huckle E.J."/>
            <person name="Hunt S."/>
            <person name="Jagels K."/>
            <person name="James K.D."/>
            <person name="Jones L."/>
            <person name="Jones M."/>
            <person name="Leather S."/>
            <person name="McDonald S."/>
            <person name="McLean J."/>
            <person name="Mooney P."/>
            <person name="Moule S."/>
            <person name="Mungall K.L."/>
            <person name="Murphy L.D."/>
            <person name="Niblett D."/>
            <person name="Odell C."/>
            <person name="Oliver K."/>
            <person name="O'Neil S."/>
            <person name="Pearson D."/>
            <person name="Quail M.A."/>
            <person name="Rabbinowitsch E."/>
            <person name="Rutherford K.M."/>
            <person name="Rutter S."/>
            <person name="Saunders D."/>
            <person name="Seeger K."/>
            <person name="Sharp S."/>
            <person name="Skelton J."/>
            <person name="Simmonds M.N."/>
            <person name="Squares R."/>
            <person name="Squares S."/>
            <person name="Stevens K."/>
            <person name="Taylor K."/>
            <person name="Taylor R.G."/>
            <person name="Tivey A."/>
            <person name="Walsh S.V."/>
            <person name="Warren T."/>
            <person name="Whitehead S."/>
            <person name="Woodward J.R."/>
            <person name="Volckaert G."/>
            <person name="Aert R."/>
            <person name="Robben J."/>
            <person name="Grymonprez B."/>
            <person name="Weltjens I."/>
            <person name="Vanstreels E."/>
            <person name="Rieger M."/>
            <person name="Schaefer M."/>
            <person name="Mueller-Auer S."/>
            <person name="Gabel C."/>
            <person name="Fuchs M."/>
            <person name="Duesterhoeft A."/>
            <person name="Fritzc C."/>
            <person name="Holzer E."/>
            <person name="Moestl D."/>
            <person name="Hilbert H."/>
            <person name="Borzym K."/>
            <person name="Langer I."/>
            <person name="Beck A."/>
            <person name="Lehrach H."/>
            <person name="Reinhardt R."/>
            <person name="Pohl T.M."/>
            <person name="Eger P."/>
            <person name="Zimmermann W."/>
            <person name="Wedler H."/>
            <person name="Wambutt R."/>
            <person name="Purnelle B."/>
            <person name="Goffeau A."/>
            <person name="Cadieu E."/>
            <person name="Dreano S."/>
            <person name="Gloux S."/>
            <person name="Lelaure V."/>
            <person name="Mottier S."/>
            <person name="Galibert F."/>
            <person name="Aves S.J."/>
            <person name="Xiang Z."/>
            <person name="Hunt C."/>
            <person name="Moore K."/>
            <person name="Hurst S.M."/>
            <person name="Lucas M."/>
            <person name="Rochet M."/>
            <person name="Gaillardin C."/>
            <person name="Tallada V.A."/>
            <person name="Garzon A."/>
            <person name="Thode G."/>
            <person name="Daga R.R."/>
            <person name="Cruzado L."/>
            <person name="Jimenez J."/>
            <person name="Sanchez M."/>
            <person name="del Rey F."/>
            <person name="Benito J."/>
            <person name="Dominguez A."/>
            <person name="Revuelta J.L."/>
            <person name="Moreno S."/>
            <person name="Armstrong J."/>
            <person name="Forsburg S.L."/>
            <person name="Cerutti L."/>
            <person name="Lowe T."/>
            <person name="McCombie W.R."/>
            <person name="Paulsen I."/>
            <person name="Potashkin J."/>
            <person name="Shpakovski G.V."/>
            <person name="Ussery D."/>
            <person name="Barrell B.G."/>
            <person name="Nurse P."/>
        </authorList>
    </citation>
    <scope>NUCLEOTIDE SEQUENCE [LARGE SCALE GENOMIC DNA]</scope>
    <source>
        <strain>972 / ATCC 24843</strain>
    </source>
</reference>
<reference key="2">
    <citation type="journal article" date="2004" name="Mol. Genet. Genomics">
        <title>Two-hybrid search for proteins that interact with Sad1 and Kms1, two membrane-bound components of the spindle pole body in fission yeast.</title>
        <authorList>
            <person name="Miki F."/>
            <person name="Kurabayashi A."/>
            <person name="Tange Y."/>
            <person name="Okazaki K."/>
            <person name="Shimanuki M."/>
            <person name="Niwa O."/>
        </authorList>
    </citation>
    <scope>INTERACTION WITH SAD1</scope>
    <scope>SUBCELLULAR LOCATION</scope>
</reference>
<reference key="3">
    <citation type="journal article" date="2008" name="J. Proteome Res.">
        <title>Phosphoproteome analysis of fission yeast.</title>
        <authorList>
            <person name="Wilson-Grady J.T."/>
            <person name="Villen J."/>
            <person name="Gygi S.P."/>
        </authorList>
    </citation>
    <scope>PHOSPHORYLATION [LARGE SCALE ANALYSIS] AT SER-34 AND SER-64</scope>
    <scope>IDENTIFICATION BY MASS SPECTROMETRY</scope>
</reference>
<accession>O59678</accession>
<evidence type="ECO:0000250" key="1">
    <source>
        <dbReference type="UniProtKB" id="Q08746"/>
    </source>
</evidence>
<evidence type="ECO:0000256" key="2">
    <source>
        <dbReference type="SAM" id="MobiDB-lite"/>
    </source>
</evidence>
<evidence type="ECO:0000269" key="3">
    <source>
    </source>
</evidence>
<evidence type="ECO:0000269" key="4">
    <source>
    </source>
</evidence>
<evidence type="ECO:0000305" key="5"/>
<keyword id="KW-0539">Nucleus</keyword>
<keyword id="KW-0597">Phosphoprotein</keyword>
<keyword id="KW-1185">Reference proteome</keyword>
<keyword id="KW-0690">Ribosome biogenesis</keyword>
<protein>
    <recommendedName>
        <fullName>Ribosome biogenesis regulatory protein homolog</fullName>
    </recommendedName>
</protein>
<proteinExistence type="evidence at protein level"/>
<sequence>MSAQIENSIPLDFDLGNMAAFDISPLDETKLSGSEKESFLFSLSRDNVQQLVNKMISLPKERTSDGVLLQLPETVTPLPRAKPLPKPKPETKWQRFARIKGIAPKKREGRLVFDEASGEWVPKWGYKGKNKELETQWLVEEGEKEKKLTSKQVRNTSKKIKRSRRH</sequence>
<gene>
    <name type="ORF">SPBC29A3.16</name>
</gene>
<feature type="chain" id="PRO_0000185378" description="Ribosome biogenesis regulatory protein homolog">
    <location>
        <begin position="1"/>
        <end position="166"/>
    </location>
</feature>
<feature type="region of interest" description="Disordered" evidence="2">
    <location>
        <begin position="144"/>
        <end position="166"/>
    </location>
</feature>
<feature type="compositionally biased region" description="Basic residues" evidence="2">
    <location>
        <begin position="156"/>
        <end position="166"/>
    </location>
</feature>
<feature type="modified residue" description="Phosphoserine" evidence="4">
    <location>
        <position position="34"/>
    </location>
</feature>
<feature type="modified residue" description="Phosphoserine" evidence="4">
    <location>
        <position position="64"/>
    </location>
</feature>